<dbReference type="EMBL" id="AE005674">
    <property type="protein sequence ID" value="AAN42776.2"/>
    <property type="status" value="ALT_INIT"/>
    <property type="molecule type" value="Genomic_DNA"/>
</dbReference>
<dbReference type="EMBL" id="AE014073">
    <property type="protein sequence ID" value="AAP16667.1"/>
    <property type="status" value="ALT_INIT"/>
    <property type="molecule type" value="Genomic_DNA"/>
</dbReference>
<dbReference type="RefSeq" id="NP_707069.2">
    <property type="nucleotide sequence ID" value="NC_004337.2"/>
</dbReference>
<dbReference type="RefSeq" id="WP_000726974.1">
    <property type="nucleotide sequence ID" value="NZ_WHSI01000156.1"/>
</dbReference>
<dbReference type="PaxDb" id="198214-SF1159"/>
<dbReference type="GeneID" id="1023395"/>
<dbReference type="KEGG" id="sfl:SF1159"/>
<dbReference type="KEGG" id="sfx:S1245"/>
<dbReference type="PATRIC" id="fig|198214.7.peg.1367"/>
<dbReference type="HOGENOM" id="CLU_164687_0_0_6"/>
<dbReference type="Proteomes" id="UP000001006">
    <property type="component" value="Chromosome"/>
</dbReference>
<dbReference type="Proteomes" id="UP000002673">
    <property type="component" value="Chromosome"/>
</dbReference>
<dbReference type="HAMAP" id="MF_01455">
    <property type="entry name" value="UPF0757"/>
    <property type="match status" value="1"/>
</dbReference>
<dbReference type="InterPro" id="IPR025693">
    <property type="entry name" value="Gly-zipper_OmpA-like_dom"/>
</dbReference>
<dbReference type="InterPro" id="IPR027367">
    <property type="entry name" value="Gly-zipper_YMGG"/>
</dbReference>
<dbReference type="InterPro" id="IPR022833">
    <property type="entry name" value="UPF0757_YmgG"/>
</dbReference>
<dbReference type="Pfam" id="PF13436">
    <property type="entry name" value="Gly-zipper_OmpA"/>
    <property type="match status" value="1"/>
</dbReference>
<dbReference type="Pfam" id="PF13441">
    <property type="entry name" value="Gly-zipper_YMGG"/>
    <property type="match status" value="1"/>
</dbReference>
<evidence type="ECO:0000255" key="1">
    <source>
        <dbReference type="HAMAP-Rule" id="MF_01455"/>
    </source>
</evidence>
<evidence type="ECO:0000305" key="2"/>
<protein>
    <recommendedName>
        <fullName evidence="1">UPF0757 protein YmgG</fullName>
    </recommendedName>
</protein>
<accession>Q83LF3</accession>
<accession>Q7UCU3</accession>
<gene>
    <name evidence="1" type="primary">ymgG</name>
    <name type="ordered locus">SF1159</name>
    <name type="ordered locus">S1245</name>
</gene>
<proteinExistence type="inferred from homology"/>
<reference key="1">
    <citation type="journal article" date="2002" name="Nucleic Acids Res.">
        <title>Genome sequence of Shigella flexneri 2a: insights into pathogenicity through comparison with genomes of Escherichia coli K12 and O157.</title>
        <authorList>
            <person name="Jin Q."/>
            <person name="Yuan Z."/>
            <person name="Xu J."/>
            <person name="Wang Y."/>
            <person name="Shen Y."/>
            <person name="Lu W."/>
            <person name="Wang J."/>
            <person name="Liu H."/>
            <person name="Yang J."/>
            <person name="Yang F."/>
            <person name="Zhang X."/>
            <person name="Zhang J."/>
            <person name="Yang G."/>
            <person name="Wu H."/>
            <person name="Qu D."/>
            <person name="Dong J."/>
            <person name="Sun L."/>
            <person name="Xue Y."/>
            <person name="Zhao A."/>
            <person name="Gao Y."/>
            <person name="Zhu J."/>
            <person name="Kan B."/>
            <person name="Ding K."/>
            <person name="Chen S."/>
            <person name="Cheng H."/>
            <person name="Yao Z."/>
            <person name="He B."/>
            <person name="Chen R."/>
            <person name="Ma D."/>
            <person name="Qiang B."/>
            <person name="Wen Y."/>
            <person name="Hou Y."/>
            <person name="Yu J."/>
        </authorList>
    </citation>
    <scope>NUCLEOTIDE SEQUENCE [LARGE SCALE GENOMIC DNA]</scope>
    <source>
        <strain>301 / Serotype 2a</strain>
    </source>
</reference>
<reference key="2">
    <citation type="journal article" date="2003" name="Infect. Immun.">
        <title>Complete genome sequence and comparative genomics of Shigella flexneri serotype 2a strain 2457T.</title>
        <authorList>
            <person name="Wei J."/>
            <person name="Goldberg M.B."/>
            <person name="Burland V."/>
            <person name="Venkatesan M.M."/>
            <person name="Deng W."/>
            <person name="Fournier G."/>
            <person name="Mayhew G.F."/>
            <person name="Plunkett G. III"/>
            <person name="Rose D.J."/>
            <person name="Darling A."/>
            <person name="Mau B."/>
            <person name="Perna N.T."/>
            <person name="Payne S.M."/>
            <person name="Runyen-Janecky L.J."/>
            <person name="Zhou S."/>
            <person name="Schwartz D.C."/>
            <person name="Blattner F.R."/>
        </authorList>
    </citation>
    <scope>NUCLEOTIDE SEQUENCE [LARGE SCALE GENOMIC DNA]</scope>
    <source>
        <strain>ATCC 700930 / 2457T / Serotype 2a</strain>
    </source>
</reference>
<sequence length="114" mass="10807">MKKKILAFGLISALFCSTPAMADMNRTTKGALLGAGVGLLTGNGVNGVLKGAAVGAGVGAVTEKGRDGKNARKGAKVGAAVGAVTGVLTGNGLEGAIKGAVIGGTGGAILGKMK</sequence>
<keyword id="KW-1185">Reference proteome</keyword>
<feature type="chain" id="PRO_0000252225" description="UPF0757 protein YmgG">
    <location>
        <begin position="1"/>
        <end position="114"/>
    </location>
</feature>
<feature type="sequence conflict" description="In Ref. 2; AAP16667." evidence="2" ref="2">
    <original>G</original>
    <variation>S</variation>
    <location>
        <position position="59"/>
    </location>
</feature>
<name>YMGG_SHIFL</name>
<comment type="similarity">
    <text evidence="1">Belongs to the UPF0757 family.</text>
</comment>
<comment type="sequence caution" evidence="2">
    <conflict type="erroneous initiation">
        <sequence resource="EMBL-CDS" id="AAN42776"/>
    </conflict>
</comment>
<comment type="sequence caution" evidence="2">
    <conflict type="erroneous initiation">
        <sequence resource="EMBL-CDS" id="AAP16667"/>
    </conflict>
</comment>
<organism>
    <name type="scientific">Shigella flexneri</name>
    <dbReference type="NCBI Taxonomy" id="623"/>
    <lineage>
        <taxon>Bacteria</taxon>
        <taxon>Pseudomonadati</taxon>
        <taxon>Pseudomonadota</taxon>
        <taxon>Gammaproteobacteria</taxon>
        <taxon>Enterobacterales</taxon>
        <taxon>Enterobacteriaceae</taxon>
        <taxon>Shigella</taxon>
    </lineage>
</organism>